<name>ILVD_CLOB8</name>
<sequence length="556" mass="58741">MRSDVITKGSKSAPQRSLLSALGLTKEEMERPLVGIVSSQNDIVPGHMNLDKIVEAVKMGVSMAGGTPIVFPAIAVCDGIAMGHEGMKYSLVTRDLIADSTEAMAMAHAFDALVMVPNCDKNVPGLLMAAARVNIPTIFVSGGPMLAGKVDGCKTSLSSMFEAVGAYNAGKITAEKLDEYENNVCPTCGSCSGMYTANSMNCLTEVLGMGLQGNGTIPAVYSERIKLAKHAGMKIMELLEKNIRPRDIMTEDAFMNAMTMDMALGCSTNSMLHLPAIAHEVGFDLNVDIANEISSKTPNLCHLAPAGHTYIEDLNDAGGIYAVMNEINKLGLLKTNLITCTGKTVGENIEGCINKNPEVIRPVKNPYSQTGGIAVLKGNLAPDSCVVKRSAVVPKMLKHEGPAKVFDCEEDALEAINTGKIVAGDVVVIRYEGPKGGPGMREMLNPTSAIAGRGLGSSVALITDGRFSGASRGASIGHVSPEAAVGGNIALVEDGDMIQIDINANTINFLVSDEELARRKANWKPRKPKITTGYLARYAALVTSGNRGAILDIPKF</sequence>
<dbReference type="EC" id="4.2.1.9" evidence="1"/>
<dbReference type="EMBL" id="CP000721">
    <property type="protein sequence ID" value="ABR33686.1"/>
    <property type="molecule type" value="Genomic_DNA"/>
</dbReference>
<dbReference type="RefSeq" id="WP_011968838.1">
    <property type="nucleotide sequence ID" value="NC_009617.1"/>
</dbReference>
<dbReference type="SMR" id="A6LTK6"/>
<dbReference type="KEGG" id="cbe:Cbei_1510"/>
<dbReference type="eggNOG" id="COG0129">
    <property type="taxonomic scope" value="Bacteria"/>
</dbReference>
<dbReference type="HOGENOM" id="CLU_014271_4_2_9"/>
<dbReference type="UniPathway" id="UPA00047">
    <property type="reaction ID" value="UER00057"/>
</dbReference>
<dbReference type="UniPathway" id="UPA00049">
    <property type="reaction ID" value="UER00061"/>
</dbReference>
<dbReference type="Proteomes" id="UP000000565">
    <property type="component" value="Chromosome"/>
</dbReference>
<dbReference type="GO" id="GO:0005829">
    <property type="term" value="C:cytosol"/>
    <property type="evidence" value="ECO:0007669"/>
    <property type="project" value="TreeGrafter"/>
</dbReference>
<dbReference type="GO" id="GO:0051537">
    <property type="term" value="F:2 iron, 2 sulfur cluster binding"/>
    <property type="evidence" value="ECO:0007669"/>
    <property type="project" value="UniProtKB-UniRule"/>
</dbReference>
<dbReference type="GO" id="GO:0004160">
    <property type="term" value="F:dihydroxy-acid dehydratase activity"/>
    <property type="evidence" value="ECO:0007669"/>
    <property type="project" value="UniProtKB-UniRule"/>
</dbReference>
<dbReference type="GO" id="GO:0000287">
    <property type="term" value="F:magnesium ion binding"/>
    <property type="evidence" value="ECO:0007669"/>
    <property type="project" value="UniProtKB-UniRule"/>
</dbReference>
<dbReference type="GO" id="GO:0009097">
    <property type="term" value="P:isoleucine biosynthetic process"/>
    <property type="evidence" value="ECO:0007669"/>
    <property type="project" value="UniProtKB-UniRule"/>
</dbReference>
<dbReference type="GO" id="GO:0009099">
    <property type="term" value="P:L-valine biosynthetic process"/>
    <property type="evidence" value="ECO:0007669"/>
    <property type="project" value="UniProtKB-UniRule"/>
</dbReference>
<dbReference type="FunFam" id="3.50.30.80:FF:000001">
    <property type="entry name" value="Dihydroxy-acid dehydratase"/>
    <property type="match status" value="1"/>
</dbReference>
<dbReference type="Gene3D" id="3.50.30.80">
    <property type="entry name" value="IlvD/EDD C-terminal domain-like"/>
    <property type="match status" value="1"/>
</dbReference>
<dbReference type="HAMAP" id="MF_00012">
    <property type="entry name" value="IlvD"/>
    <property type="match status" value="1"/>
</dbReference>
<dbReference type="InterPro" id="IPR042096">
    <property type="entry name" value="Dihydro-acid_dehy_C"/>
</dbReference>
<dbReference type="InterPro" id="IPR004404">
    <property type="entry name" value="DihydroxyA_deHydtase"/>
</dbReference>
<dbReference type="InterPro" id="IPR020558">
    <property type="entry name" value="DiOHA_6PGluconate_deHydtase_CS"/>
</dbReference>
<dbReference type="InterPro" id="IPR056740">
    <property type="entry name" value="ILV_EDD_C"/>
</dbReference>
<dbReference type="InterPro" id="IPR000581">
    <property type="entry name" value="ILV_EDD_N"/>
</dbReference>
<dbReference type="InterPro" id="IPR037237">
    <property type="entry name" value="IlvD/EDD_N"/>
</dbReference>
<dbReference type="NCBIfam" id="TIGR00110">
    <property type="entry name" value="ilvD"/>
    <property type="match status" value="1"/>
</dbReference>
<dbReference type="NCBIfam" id="NF002068">
    <property type="entry name" value="PRK00911.1"/>
    <property type="match status" value="1"/>
</dbReference>
<dbReference type="PANTHER" id="PTHR43661">
    <property type="entry name" value="D-XYLONATE DEHYDRATASE"/>
    <property type="match status" value="1"/>
</dbReference>
<dbReference type="PANTHER" id="PTHR43661:SF3">
    <property type="entry name" value="D-XYLONATE DEHYDRATASE YAGF-RELATED"/>
    <property type="match status" value="1"/>
</dbReference>
<dbReference type="Pfam" id="PF24877">
    <property type="entry name" value="ILV_EDD_C"/>
    <property type="match status" value="1"/>
</dbReference>
<dbReference type="Pfam" id="PF00920">
    <property type="entry name" value="ILVD_EDD_N"/>
    <property type="match status" value="1"/>
</dbReference>
<dbReference type="SUPFAM" id="SSF143975">
    <property type="entry name" value="IlvD/EDD N-terminal domain-like"/>
    <property type="match status" value="1"/>
</dbReference>
<dbReference type="SUPFAM" id="SSF52016">
    <property type="entry name" value="LeuD/IlvD-like"/>
    <property type="match status" value="1"/>
</dbReference>
<dbReference type="PROSITE" id="PS00886">
    <property type="entry name" value="ILVD_EDD_1"/>
    <property type="match status" value="1"/>
</dbReference>
<dbReference type="PROSITE" id="PS00887">
    <property type="entry name" value="ILVD_EDD_2"/>
    <property type="match status" value="1"/>
</dbReference>
<gene>
    <name evidence="1" type="primary">ilvD</name>
    <name type="ordered locus">Cbei_1510</name>
</gene>
<accession>A6LTK6</accession>
<proteinExistence type="inferred from homology"/>
<comment type="function">
    <text evidence="1">Functions in the biosynthesis of branched-chain amino acids. Catalyzes the dehydration of (2R,3R)-2,3-dihydroxy-3-methylpentanoate (2,3-dihydroxy-3-methylvalerate) into 2-oxo-3-methylpentanoate (2-oxo-3-methylvalerate) and of (2R)-2,3-dihydroxy-3-methylbutanoate (2,3-dihydroxyisovalerate) into 2-oxo-3-methylbutanoate (2-oxoisovalerate), the penultimate precursor to L-isoleucine and L-valine, respectively.</text>
</comment>
<comment type="catalytic activity">
    <reaction evidence="1">
        <text>(2R)-2,3-dihydroxy-3-methylbutanoate = 3-methyl-2-oxobutanoate + H2O</text>
        <dbReference type="Rhea" id="RHEA:24809"/>
        <dbReference type="ChEBI" id="CHEBI:11851"/>
        <dbReference type="ChEBI" id="CHEBI:15377"/>
        <dbReference type="ChEBI" id="CHEBI:49072"/>
        <dbReference type="EC" id="4.2.1.9"/>
    </reaction>
    <physiologicalReaction direction="left-to-right" evidence="1">
        <dbReference type="Rhea" id="RHEA:24810"/>
    </physiologicalReaction>
</comment>
<comment type="catalytic activity">
    <reaction evidence="1">
        <text>(2R,3R)-2,3-dihydroxy-3-methylpentanoate = (S)-3-methyl-2-oxopentanoate + H2O</text>
        <dbReference type="Rhea" id="RHEA:27694"/>
        <dbReference type="ChEBI" id="CHEBI:15377"/>
        <dbReference type="ChEBI" id="CHEBI:35146"/>
        <dbReference type="ChEBI" id="CHEBI:49258"/>
        <dbReference type="EC" id="4.2.1.9"/>
    </reaction>
    <physiologicalReaction direction="left-to-right" evidence="1">
        <dbReference type="Rhea" id="RHEA:27695"/>
    </physiologicalReaction>
</comment>
<comment type="cofactor">
    <cofactor evidence="1">
        <name>[2Fe-2S] cluster</name>
        <dbReference type="ChEBI" id="CHEBI:190135"/>
    </cofactor>
    <text evidence="1">Binds 1 [2Fe-2S] cluster per subunit. This cluster acts as a Lewis acid cofactor.</text>
</comment>
<comment type="cofactor">
    <cofactor evidence="1">
        <name>Mg(2+)</name>
        <dbReference type="ChEBI" id="CHEBI:18420"/>
    </cofactor>
</comment>
<comment type="pathway">
    <text evidence="1">Amino-acid biosynthesis; L-isoleucine biosynthesis; L-isoleucine from 2-oxobutanoate: step 3/4.</text>
</comment>
<comment type="pathway">
    <text evidence="1">Amino-acid biosynthesis; L-valine biosynthesis; L-valine from pyruvate: step 3/4.</text>
</comment>
<comment type="subunit">
    <text evidence="1">Homodimer.</text>
</comment>
<comment type="similarity">
    <text evidence="1">Belongs to the IlvD/Edd family.</text>
</comment>
<keyword id="KW-0001">2Fe-2S</keyword>
<keyword id="KW-0028">Amino-acid biosynthesis</keyword>
<keyword id="KW-0100">Branched-chain amino acid biosynthesis</keyword>
<keyword id="KW-0408">Iron</keyword>
<keyword id="KW-0411">Iron-sulfur</keyword>
<keyword id="KW-0456">Lyase</keyword>
<keyword id="KW-0460">Magnesium</keyword>
<keyword id="KW-0479">Metal-binding</keyword>
<organism>
    <name type="scientific">Clostridium beijerinckii (strain ATCC 51743 / NCIMB 8052)</name>
    <name type="common">Clostridium acetobutylicum</name>
    <dbReference type="NCBI Taxonomy" id="290402"/>
    <lineage>
        <taxon>Bacteria</taxon>
        <taxon>Bacillati</taxon>
        <taxon>Bacillota</taxon>
        <taxon>Clostridia</taxon>
        <taxon>Eubacteriales</taxon>
        <taxon>Clostridiaceae</taxon>
        <taxon>Clostridium</taxon>
    </lineage>
</organism>
<evidence type="ECO:0000255" key="1">
    <source>
        <dbReference type="HAMAP-Rule" id="MF_00012"/>
    </source>
</evidence>
<protein>
    <recommendedName>
        <fullName evidence="1">Dihydroxy-acid dehydratase</fullName>
        <shortName evidence="1">DAD</shortName>
        <ecNumber evidence="1">4.2.1.9</ecNumber>
    </recommendedName>
</protein>
<feature type="chain" id="PRO_1000073971" description="Dihydroxy-acid dehydratase">
    <location>
        <begin position="1"/>
        <end position="556"/>
    </location>
</feature>
<feature type="active site" description="Proton acceptor" evidence="1">
    <location>
        <position position="468"/>
    </location>
</feature>
<feature type="binding site" evidence="1">
    <location>
        <position position="78"/>
    </location>
    <ligand>
        <name>Mg(2+)</name>
        <dbReference type="ChEBI" id="CHEBI:18420"/>
    </ligand>
</feature>
<feature type="binding site" evidence="1">
    <location>
        <position position="119"/>
    </location>
    <ligand>
        <name>[2Fe-2S] cluster</name>
        <dbReference type="ChEBI" id="CHEBI:190135"/>
    </ligand>
</feature>
<feature type="binding site" evidence="1">
    <location>
        <position position="120"/>
    </location>
    <ligand>
        <name>Mg(2+)</name>
        <dbReference type="ChEBI" id="CHEBI:18420"/>
    </ligand>
</feature>
<feature type="binding site" description="via carbamate group" evidence="1">
    <location>
        <position position="121"/>
    </location>
    <ligand>
        <name>Mg(2+)</name>
        <dbReference type="ChEBI" id="CHEBI:18420"/>
    </ligand>
</feature>
<feature type="binding site" evidence="1">
    <location>
        <position position="191"/>
    </location>
    <ligand>
        <name>[2Fe-2S] cluster</name>
        <dbReference type="ChEBI" id="CHEBI:190135"/>
    </ligand>
</feature>
<feature type="binding site" evidence="1">
    <location>
        <position position="442"/>
    </location>
    <ligand>
        <name>Mg(2+)</name>
        <dbReference type="ChEBI" id="CHEBI:18420"/>
    </ligand>
</feature>
<feature type="modified residue" description="N6-carboxylysine" evidence="1">
    <location>
        <position position="121"/>
    </location>
</feature>
<reference key="1">
    <citation type="submission" date="2007-06" db="EMBL/GenBank/DDBJ databases">
        <title>Complete sequence of Clostridium beijerinckii NCIMB 8052.</title>
        <authorList>
            <consortium name="US DOE Joint Genome Institute"/>
            <person name="Copeland A."/>
            <person name="Lucas S."/>
            <person name="Lapidus A."/>
            <person name="Barry K."/>
            <person name="Detter J.C."/>
            <person name="Glavina del Rio T."/>
            <person name="Hammon N."/>
            <person name="Israni S."/>
            <person name="Dalin E."/>
            <person name="Tice H."/>
            <person name="Pitluck S."/>
            <person name="Sims D."/>
            <person name="Brettin T."/>
            <person name="Bruce D."/>
            <person name="Tapia R."/>
            <person name="Brainard J."/>
            <person name="Schmutz J."/>
            <person name="Larimer F."/>
            <person name="Land M."/>
            <person name="Hauser L."/>
            <person name="Kyrpides N."/>
            <person name="Mikhailova N."/>
            <person name="Bennet G."/>
            <person name="Cann I."/>
            <person name="Chen J.-S."/>
            <person name="Contreras A.L."/>
            <person name="Jones D."/>
            <person name="Kashket E."/>
            <person name="Mitchell W."/>
            <person name="Stoddard S."/>
            <person name="Schwarz W."/>
            <person name="Qureshi N."/>
            <person name="Young M."/>
            <person name="Shi Z."/>
            <person name="Ezeji T."/>
            <person name="White B."/>
            <person name="Blaschek H."/>
            <person name="Richardson P."/>
        </authorList>
    </citation>
    <scope>NUCLEOTIDE SEQUENCE [LARGE SCALE GENOMIC DNA]</scope>
    <source>
        <strain>ATCC 51743 / NCIMB 8052</strain>
    </source>
</reference>